<gene>
    <name evidence="6" type="primary">pat-12</name>
    <name evidence="6" type="ORF">T17H7.4</name>
</gene>
<protein>
    <recommendedName>
        <fullName evidence="4">Protein pat-12</fullName>
    </recommendedName>
    <alternativeName>
        <fullName evidence="6">Paralyzed arrest at two-fold 12 protein</fullName>
    </alternativeName>
</protein>
<organism evidence="5">
    <name type="scientific">Caenorhabditis elegans</name>
    <dbReference type="NCBI Taxonomy" id="6239"/>
    <lineage>
        <taxon>Eukaryota</taxon>
        <taxon>Metazoa</taxon>
        <taxon>Ecdysozoa</taxon>
        <taxon>Nematoda</taxon>
        <taxon>Chromadorea</taxon>
        <taxon>Rhabditida</taxon>
        <taxon>Rhabditina</taxon>
        <taxon>Rhabditomorpha</taxon>
        <taxon>Rhabditoidea</taxon>
        <taxon>Rhabditidae</taxon>
        <taxon>Peloderinae</taxon>
        <taxon>Caenorhabditis</taxon>
    </lineage>
</organism>
<dbReference type="EMBL" id="BX284603">
    <property type="protein sequence ID" value="CCD65367.1"/>
    <property type="molecule type" value="Genomic_DNA"/>
</dbReference>
<dbReference type="EMBL" id="BX284603">
    <property type="protein sequence ID" value="CCD65368.1"/>
    <property type="molecule type" value="Genomic_DNA"/>
</dbReference>
<dbReference type="EMBL" id="BX284603">
    <property type="protein sequence ID" value="CCD65369.1"/>
    <property type="molecule type" value="Genomic_DNA"/>
</dbReference>
<dbReference type="EMBL" id="BX284603">
    <property type="protein sequence ID" value="CCD65370.1"/>
    <property type="molecule type" value="Genomic_DNA"/>
</dbReference>
<dbReference type="EMBL" id="BX284603">
    <property type="protein sequence ID" value="CCD65371.1"/>
    <property type="molecule type" value="Genomic_DNA"/>
</dbReference>
<dbReference type="EMBL" id="BX284603">
    <property type="protein sequence ID" value="CCD65372.1"/>
    <property type="molecule type" value="Genomic_DNA"/>
</dbReference>
<dbReference type="EMBL" id="BX284603">
    <property type="protein sequence ID" value="CCD65373.1"/>
    <property type="molecule type" value="Genomic_DNA"/>
</dbReference>
<dbReference type="EMBL" id="BX284603">
    <property type="protein sequence ID" value="CCD65374.1"/>
    <property type="molecule type" value="Genomic_DNA"/>
</dbReference>
<dbReference type="EMBL" id="BX284603">
    <property type="protein sequence ID" value="CCD65375.1"/>
    <property type="molecule type" value="Genomic_DNA"/>
</dbReference>
<dbReference type="EMBL" id="BX284603">
    <property type="protein sequence ID" value="CCD65376.1"/>
    <property type="molecule type" value="Genomic_DNA"/>
</dbReference>
<dbReference type="EMBL" id="BX284603">
    <property type="protein sequence ID" value="CCD65377.1"/>
    <property type="molecule type" value="Genomic_DNA"/>
</dbReference>
<dbReference type="EMBL" id="BX284603">
    <property type="protein sequence ID" value="CCD65378.1"/>
    <property type="molecule type" value="Genomic_DNA"/>
</dbReference>
<dbReference type="RefSeq" id="NP_001022769.1">
    <property type="nucleotide sequence ID" value="NM_001027598.2"/>
</dbReference>
<dbReference type="RefSeq" id="NP_001359886.1">
    <molecule id="Q95QA6-7"/>
    <property type="nucleotide sequence ID" value="NM_001373834.2"/>
</dbReference>
<dbReference type="RefSeq" id="NP_001367549.1">
    <molecule id="Q95QA6-1"/>
    <property type="nucleotide sequence ID" value="NM_001381699.1"/>
</dbReference>
<dbReference type="RefSeq" id="NP_001367550.1">
    <molecule id="Q95QA6-2"/>
    <property type="nucleotide sequence ID" value="NM_001381698.1"/>
</dbReference>
<dbReference type="RefSeq" id="NP_001367551.1">
    <molecule id="Q95QA6-3"/>
    <property type="nucleotide sequence ID" value="NM_001381700.1"/>
</dbReference>
<dbReference type="RefSeq" id="NP_001367552.1">
    <molecule id="Q95QA6-5"/>
    <property type="nucleotide sequence ID" value="NM_001381703.2"/>
</dbReference>
<dbReference type="RefSeq" id="NP_001367554.1">
    <molecule id="Q95QA6-8"/>
    <property type="nucleotide sequence ID" value="NM_001381701.2"/>
</dbReference>
<dbReference type="RefSeq" id="NP_001367555.1">
    <molecule id="Q95QA6-9"/>
    <property type="nucleotide sequence ID" value="NM_001381702.2"/>
</dbReference>
<dbReference type="RefSeq" id="NP_001379711.1">
    <molecule id="Q95QA6-4"/>
    <property type="nucleotide sequence ID" value="NM_001393260.1"/>
</dbReference>
<dbReference type="RefSeq" id="NP_497244.1">
    <property type="nucleotide sequence ID" value="NM_064843.4"/>
</dbReference>
<dbReference type="RefSeq" id="NP_497245.1">
    <property type="nucleotide sequence ID" value="NM_064844.3"/>
</dbReference>
<dbReference type="RefSeq" id="NP_497246.1">
    <property type="nucleotide sequence ID" value="NM_064845.3"/>
</dbReference>
<dbReference type="RefSeq" id="NP_497247.2">
    <property type="nucleotide sequence ID" value="NM_064846.3"/>
</dbReference>
<dbReference type="RefSeq" id="NP_497248.2">
    <property type="nucleotide sequence ID" value="NM_064847.2"/>
</dbReference>
<dbReference type="RefSeq" id="NP_741076.1">
    <molecule id="Q95QA6-10"/>
    <property type="nucleotide sequence ID" value="NM_171067.5"/>
</dbReference>
<dbReference type="RefSeq" id="NP_741077.1">
    <molecule id="Q95QA6-11"/>
    <property type="nucleotide sequence ID" value="NM_171068.5"/>
</dbReference>
<dbReference type="RefSeq" id="NP_741078.1">
    <property type="nucleotide sequence ID" value="NM_171069.1"/>
</dbReference>
<dbReference type="RefSeq" id="NP_741079.1">
    <property type="nucleotide sequence ID" value="NM_171859.1"/>
</dbReference>
<dbReference type="RefSeq" id="NP_741080.1">
    <property type="nucleotide sequence ID" value="NM_171070.4"/>
</dbReference>
<dbReference type="RefSeq" id="NP_741081.1">
    <property type="nucleotide sequence ID" value="NM_171071.3"/>
</dbReference>
<dbReference type="SMR" id="Q95QA6"/>
<dbReference type="DIP" id="DIP-27452N"/>
<dbReference type="FunCoup" id="Q95QA6">
    <property type="interactions" value="45"/>
</dbReference>
<dbReference type="IntAct" id="Q95QA6">
    <property type="interactions" value="99"/>
</dbReference>
<dbReference type="PeptideAtlas" id="Q95QA6"/>
<dbReference type="EnsemblMetazoa" id="T17H7.4a.1">
    <molecule id="Q95QA6-1"/>
    <property type="protein sequence ID" value="T17H7.4a.1"/>
    <property type="gene ID" value="WBGene00003936"/>
</dbReference>
<dbReference type="EnsemblMetazoa" id="T17H7.4b.1">
    <molecule id="Q95QA6-2"/>
    <property type="protein sequence ID" value="T17H7.4b.1"/>
    <property type="gene ID" value="WBGene00003936"/>
</dbReference>
<dbReference type="EnsemblMetazoa" id="T17H7.4c.1">
    <molecule id="Q95QA6-3"/>
    <property type="protein sequence ID" value="T17H7.4c.1"/>
    <property type="gene ID" value="WBGene00003936"/>
</dbReference>
<dbReference type="EnsemblMetazoa" id="T17H7.4d.1">
    <molecule id="Q95QA6-4"/>
    <property type="protein sequence ID" value="T17H7.4d.1"/>
    <property type="gene ID" value="WBGene00003936"/>
</dbReference>
<dbReference type="EnsemblMetazoa" id="T17H7.4d.2">
    <molecule id="Q95QA6-4"/>
    <property type="protein sequence ID" value="T17H7.4d.2"/>
    <property type="gene ID" value="WBGene00003936"/>
</dbReference>
<dbReference type="EnsemblMetazoa" id="T17H7.4d.3">
    <molecule id="Q95QA6-4"/>
    <property type="protein sequence ID" value="T17H7.4d.3"/>
    <property type="gene ID" value="WBGene00003936"/>
</dbReference>
<dbReference type="EnsemblMetazoa" id="T17H7.4d.4">
    <molecule id="Q95QA6-4"/>
    <property type="protein sequence ID" value="T17H7.4d.4"/>
    <property type="gene ID" value="WBGene00003936"/>
</dbReference>
<dbReference type="EnsemblMetazoa" id="T17H7.4d.5">
    <molecule id="Q95QA6-4"/>
    <property type="protein sequence ID" value="T17H7.4d.5"/>
    <property type="gene ID" value="WBGene00003936"/>
</dbReference>
<dbReference type="EnsemblMetazoa" id="T17H7.4d.6">
    <molecule id="Q95QA6-4"/>
    <property type="protein sequence ID" value="T17H7.4d.6"/>
    <property type="gene ID" value="WBGene00003936"/>
</dbReference>
<dbReference type="EnsemblMetazoa" id="T17H7.4d.7">
    <molecule id="Q95QA6-4"/>
    <property type="protein sequence ID" value="T17H7.4d.7"/>
    <property type="gene ID" value="WBGene00003936"/>
</dbReference>
<dbReference type="EnsemblMetazoa" id="T17H7.4e.1">
    <molecule id="Q95QA6-5"/>
    <property type="protein sequence ID" value="T17H7.4e.1"/>
    <property type="gene ID" value="WBGene00003936"/>
</dbReference>
<dbReference type="EnsemblMetazoa" id="T17H7.4g.1">
    <molecule id="Q95QA6-7"/>
    <property type="protein sequence ID" value="T17H7.4g.1"/>
    <property type="gene ID" value="WBGene00003936"/>
</dbReference>
<dbReference type="EnsemblMetazoa" id="T17H7.4g.2">
    <molecule id="Q95QA6-7"/>
    <property type="protein sequence ID" value="T17H7.4g.2"/>
    <property type="gene ID" value="WBGene00003936"/>
</dbReference>
<dbReference type="EnsemblMetazoa" id="T17H7.4h.1">
    <molecule id="Q95QA6-8"/>
    <property type="protein sequence ID" value="T17H7.4h.1"/>
    <property type="gene ID" value="WBGene00003936"/>
</dbReference>
<dbReference type="EnsemblMetazoa" id="T17H7.4i.1">
    <molecule id="Q95QA6-9"/>
    <property type="protein sequence ID" value="T17H7.4i.1"/>
    <property type="gene ID" value="WBGene00003936"/>
</dbReference>
<dbReference type="EnsemblMetazoa" id="T17H7.4j.1">
    <molecule id="Q95QA6-10"/>
    <property type="protein sequence ID" value="T17H7.4j.1"/>
    <property type="gene ID" value="WBGene00003936"/>
</dbReference>
<dbReference type="EnsemblMetazoa" id="T17H7.4k.1">
    <molecule id="Q95QA6-11"/>
    <property type="protein sequence ID" value="T17H7.4k.1"/>
    <property type="gene ID" value="WBGene00003936"/>
</dbReference>
<dbReference type="EnsemblMetazoa" id="T17H7.4k.2">
    <molecule id="Q95QA6-11"/>
    <property type="protein sequence ID" value="T17H7.4k.2"/>
    <property type="gene ID" value="WBGene00003936"/>
</dbReference>
<dbReference type="GeneID" id="175227"/>
<dbReference type="KEGG" id="cel:CELE_T17H7.4"/>
<dbReference type="UCSC" id="T17H7.4g.1">
    <property type="organism name" value="c. elegans"/>
</dbReference>
<dbReference type="AGR" id="WB:WBGene00003936"/>
<dbReference type="CTD" id="175227"/>
<dbReference type="WormBase" id="T17H7.4a">
    <molecule id="Q95QA6-1"/>
    <property type="protein sequence ID" value="CE28670"/>
    <property type="gene ID" value="WBGene00003936"/>
    <property type="gene designation" value="pat-12"/>
</dbReference>
<dbReference type="WormBase" id="T17H7.4b">
    <molecule id="Q95QA6-2"/>
    <property type="protein sequence ID" value="CE28671"/>
    <property type="gene ID" value="WBGene00003936"/>
    <property type="gene designation" value="pat-12"/>
</dbReference>
<dbReference type="WormBase" id="T17H7.4c">
    <molecule id="Q95QA6-3"/>
    <property type="protein sequence ID" value="CE28672"/>
    <property type="gene ID" value="WBGene00003936"/>
    <property type="gene designation" value="pat-12"/>
</dbReference>
<dbReference type="WormBase" id="T17H7.4d">
    <molecule id="Q95QA6-4"/>
    <property type="protein sequence ID" value="CE35016"/>
    <property type="gene ID" value="WBGene00003936"/>
    <property type="gene designation" value="pat-12"/>
</dbReference>
<dbReference type="WormBase" id="T17H7.4e">
    <molecule id="Q95QA6-5"/>
    <property type="protein sequence ID" value="CE31612"/>
    <property type="gene ID" value="WBGene00003936"/>
    <property type="gene designation" value="pat-12"/>
</dbReference>
<dbReference type="WormBase" id="T17H7.4g">
    <molecule id="Q95QA6-7"/>
    <property type="protein sequence ID" value="CE31614"/>
    <property type="gene ID" value="WBGene00003936"/>
    <property type="gene designation" value="pat-12"/>
</dbReference>
<dbReference type="WormBase" id="T17H7.4h">
    <molecule id="Q95QA6-8"/>
    <property type="protein sequence ID" value="CE31615"/>
    <property type="gene ID" value="WBGene00003936"/>
    <property type="gene designation" value="pat-12"/>
</dbReference>
<dbReference type="WormBase" id="T17H7.4i">
    <molecule id="Q95QA6-9"/>
    <property type="protein sequence ID" value="CE31616"/>
    <property type="gene ID" value="WBGene00003936"/>
    <property type="gene designation" value="pat-12"/>
</dbReference>
<dbReference type="WormBase" id="T17H7.4j">
    <molecule id="Q95QA6-10"/>
    <property type="protein sequence ID" value="CE31617"/>
    <property type="gene ID" value="WBGene00003936"/>
    <property type="gene designation" value="pat-12"/>
</dbReference>
<dbReference type="WormBase" id="T17H7.4k">
    <molecule id="Q95QA6-11"/>
    <property type="protein sequence ID" value="CE31618"/>
    <property type="gene ID" value="WBGene00003936"/>
    <property type="gene designation" value="pat-12"/>
</dbReference>
<dbReference type="InParanoid" id="Q95QA6"/>
<dbReference type="OMA" id="NRTENDR"/>
<dbReference type="OrthoDB" id="5849570at2759"/>
<dbReference type="SignaLink" id="Q95QA6"/>
<dbReference type="PRO" id="PR:Q95QA6"/>
<dbReference type="Proteomes" id="UP000001940">
    <property type="component" value="Chromosome III"/>
</dbReference>
<dbReference type="Bgee" id="WBGene00003936">
    <property type="expression patterns" value="Expressed in pharyngeal muscle cell (C elegans) and 3 other cell types or tissues"/>
</dbReference>
<dbReference type="ExpressionAtlas" id="Q95QA6">
    <property type="expression patterns" value="baseline and differential"/>
</dbReference>
<dbReference type="GO" id="GO:0016324">
    <property type="term" value="C:apical plasma membrane"/>
    <property type="evidence" value="ECO:0007669"/>
    <property type="project" value="UniProtKB-SubCell"/>
</dbReference>
<dbReference type="GO" id="GO:0009925">
    <property type="term" value="C:basal plasma membrane"/>
    <property type="evidence" value="ECO:0007669"/>
    <property type="project" value="UniProtKB-SubCell"/>
</dbReference>
<dbReference type="GO" id="GO:0005737">
    <property type="term" value="C:cytoplasm"/>
    <property type="evidence" value="ECO:0007669"/>
    <property type="project" value="UniProtKB-SubCell"/>
</dbReference>
<dbReference type="GO" id="GO:0005856">
    <property type="term" value="C:cytoskeleton"/>
    <property type="evidence" value="ECO:0007669"/>
    <property type="project" value="UniProtKB-SubCell"/>
</dbReference>
<dbReference type="GO" id="GO:0030056">
    <property type="term" value="C:hemidesmosome"/>
    <property type="evidence" value="ECO:0000314"/>
    <property type="project" value="WormBase"/>
</dbReference>
<dbReference type="GO" id="GO:0048598">
    <property type="term" value="P:embryonic morphogenesis"/>
    <property type="evidence" value="ECO:0000315"/>
    <property type="project" value="WormBase"/>
</dbReference>
<dbReference type="GO" id="GO:0031581">
    <property type="term" value="P:hemidesmosome assembly"/>
    <property type="evidence" value="ECO:0000315"/>
    <property type="project" value="WormBase"/>
</dbReference>
<keyword id="KW-0025">Alternative splicing</keyword>
<keyword id="KW-0965">Cell junction</keyword>
<keyword id="KW-1003">Cell membrane</keyword>
<keyword id="KW-0963">Cytoplasm</keyword>
<keyword id="KW-0206">Cytoskeleton</keyword>
<keyword id="KW-0472">Membrane</keyword>
<keyword id="KW-1185">Reference proteome</keyword>
<name>PAT12_CAEEL</name>
<comment type="function">
    <molecule>Isoform a</molecule>
    <text evidence="2">Required for embryonic morphology and development. Plays both a functional and a structural role in the maintenance and probably biogenesis of fibrous organelles, a hemidesomosome-like junction structure, which ensures muscle stability and muscle connection to the external cuticle.</text>
</comment>
<comment type="subunit">
    <text evidence="2">Interacts with vab-10 (via plankin domain).</text>
</comment>
<comment type="interaction">
    <interactant intactId="EBI-327642">
        <id>Q95QA6</id>
    </interactant>
    <interactant intactId="EBI-2315883">
        <id>P03949</id>
        <label>abl-1</label>
    </interactant>
    <organismsDiffer>false</organismsDiffer>
    <experiments>3</experiments>
</comment>
<comment type="interaction">
    <interactant intactId="EBI-327642">
        <id>Q95QA6</id>
    </interactant>
    <interactant intactId="EBI-316352">
        <id>G5EFL5</id>
        <label>alp-1</label>
    </interactant>
    <organismsDiffer>false</organismsDiffer>
    <experiments>4</experiments>
</comment>
<comment type="interaction">
    <interactant intactId="EBI-327642">
        <id>Q95QA6</id>
    </interactant>
    <interactant intactId="EBI-312747">
        <id>O18302</id>
        <label>gopc-1</label>
    </interactant>
    <organismsDiffer>false</organismsDiffer>
    <experiments>3</experiments>
</comment>
<comment type="interaction">
    <interactant intactId="EBI-327642">
        <id>Q95QA6</id>
    </interactant>
    <interactant intactId="EBI-325337">
        <id>G5EC32</id>
        <label>sorb-1</label>
    </interactant>
    <organismsDiffer>false</organismsDiffer>
    <experiments>13</experiments>
</comment>
<comment type="interaction">
    <interactant intactId="EBI-327642">
        <id>Q95QA6</id>
    </interactant>
    <interactant intactId="EBI-320612">
        <id>G5ECG0</id>
        <label>tac-1</label>
    </interactant>
    <organismsDiffer>false</organismsDiffer>
    <experiments>3</experiments>
</comment>
<comment type="subcellular location">
    <molecule>Isoform a</molecule>
    <subcellularLocation>
        <location evidence="2">Apical cell membrane</location>
        <topology evidence="3">Peripheral membrane protein</topology>
    </subcellularLocation>
    <subcellularLocation>
        <location evidence="2">Basal cell membrane</location>
        <topology evidence="3">Peripheral membrane protein</topology>
    </subcellularLocation>
    <subcellularLocation>
        <location evidence="2">Cytoplasm</location>
    </subcellularLocation>
    <subcellularLocation>
        <location evidence="2">Cell junction</location>
        <location evidence="2">Hemidesmosome</location>
    </subcellularLocation>
    <text evidence="2">Co=localizes with cytoplasmic intermediate filaments.</text>
</comment>
<comment type="subcellular location">
    <molecule>Isoform e</molecule>
    <subcellularLocation>
        <location evidence="2">Cell membrane</location>
    </subcellularLocation>
</comment>
<comment type="subcellular location">
    <molecule>Isoform i</molecule>
    <subcellularLocation>
        <location evidence="2">Cell membrane</location>
    </subcellularLocation>
</comment>
<comment type="subcellular location">
    <molecule>Isoform j</molecule>
    <subcellularLocation>
        <location evidence="2">Basal cell membrane</location>
    </subcellularLocation>
    <subcellularLocation>
        <location evidence="2">Apical cell membrane</location>
    </subcellularLocation>
    <subcellularLocation>
        <location evidence="2">Cytoplasm</location>
    </subcellularLocation>
    <subcellularLocation>
        <location evidence="2">Cell junction</location>
        <location evidence="2">Hemidesmosome</location>
    </subcellularLocation>
</comment>
<comment type="subcellular location">
    <molecule>Isoform k</molecule>
    <subcellularLocation>
        <location evidence="2">Cell junction</location>
        <location evidence="2">Hemidesmosome</location>
    </subcellularLocation>
    <subcellularLocation>
        <location evidence="2">Cytoplasm</location>
        <location evidence="2">Cytoskeleton</location>
    </subcellularLocation>
    <text evidence="2">Co-localizes with actin.</text>
</comment>
<comment type="alternative products">
    <event type="alternative splicing"/>
    <isoform>
        <id>Q95QA6-1</id>
        <name evidence="6">a</name>
        <sequence type="displayed"/>
    </isoform>
    <isoform>
        <id>Q95QA6-2</id>
        <name evidence="7">b</name>
        <sequence type="described" ref="VSP_058357"/>
    </isoform>
    <isoform>
        <id>Q95QA6-3</id>
        <name evidence="8">c</name>
        <sequence type="described" ref="VSP_058360"/>
    </isoform>
    <isoform>
        <id>Q95QA6-4</id>
        <name evidence="9">d</name>
        <sequence type="described" ref="VSP_058356"/>
    </isoform>
    <isoform>
        <id>Q95QA6-5</id>
        <name evidence="10">e</name>
        <sequence type="described" ref="VSP_058353 VSP_058359 VSP_058361"/>
    </isoform>
    <isoform>
        <id>Q95QA6-7</id>
        <name evidence="11">g</name>
        <sequence type="described" ref="VSP_058352 VSP_058359"/>
    </isoform>
    <isoform>
        <id>Q95QA6-8</id>
        <name evidence="12">h</name>
        <sequence type="described" ref="VSP_058353 VSP_058358 VSP_058361"/>
    </isoform>
    <isoform>
        <id>Q95QA6-9</id>
        <name evidence="13">i</name>
        <sequence type="described" ref="VSP_058353 VSP_058357 VSP_058361"/>
    </isoform>
    <isoform>
        <id>Q95QA6-10</id>
        <name evidence="14">j</name>
        <sequence type="described" ref="VSP_058355"/>
    </isoform>
    <isoform>
        <id>Q95QA6-11</id>
        <name evidence="15">k</name>
        <sequence type="described" ref="VSP_058354"/>
    </isoform>
</comment>
<comment type="tissue specificity">
    <text evidence="2">Isoform a: Expressed in the uterus, the vulva, the rectum, mechanosensory neurons and in head and tail neurons. Isoform e: Expressed in spermatheca and weakly in the vulva. Isoform f: Expressed in spermatheca and weakly in the vulva. Isoform i: Expressed in spermatheca and weakly in the vulva.</text>
</comment>
<comment type="developmental stage">
    <text evidence="2">Isoform a: Expressed in dorso-ventral epidermal cells from the comma stage of embryonic development to adulthood. Isoform j: Expressed in the pharynx and head neurons from the 3-fold stage of embryonic development to adulthood. Isoform k: Expressed in dorso-ventral epidermal cells, the uterus, the vulva, the rectum and in head and tail neurons from the 3-fold stage of embryonic development to adulthood. Specifically expressed in seam cells at the 3-fold stage.</text>
</comment>
<comment type="disruption phenotype">
    <text evidence="2">Embryonic lethal with failed embryonic morphogenesis. Disrupted intracellular structural integrity from the 2-fold stage of embryogenesis resulting in thickening of the epidermis, abnormal intermediate filament distribution and detachment and collapse of muscle from the cell body, particularly in the head, tail and midbody. RNAi-mediated knockdown results in developmental defects whereby 95% embryos do not undergo morphogenesis and arrest before the two-fold stage with abnormal head and tail structures and reduced motility within the eggshell. Lethality in 40% of mutants (that survive RNAi-mediated knockdown) by the adult molting phase of development, with the remaining mutants displaying molting defects and paralysis.</text>
</comment>
<sequence>MTSHIATETSVNRWSTEPVVREEGRPPGPEDFPSTKQGREQDGNVIGITPNYKIGEQKPNSELNLGKTGSLPRGSGDYKMTYRQEDYKQTIIDPKVITNANMPYISTRIPDPRRNLAGDFPSEHSKSKIKLDPLEQRRFRSSESRPITTSNYLAESVDRHREMEASRLREYLKAKENEANQPWNKPGWPGPKKNDESLRELETMKQRIETLKRDANKGPVNAELDELSKRAEELRKRDGWSKYKLVESDIYKTDPDPMPANIKDQVRDLLESRNSVETTTTQRDHDKSGYVTDVSTATWNFSTVDYSPRSVVSMNGASHDILKDDKPRSIMKRNDLVRREQMLYPTVDTQVVKSVVKKPTVTETVQRFEETRRTEEVERRVQRREKKERRSRHHSSSRHHSGWEGHTGGYQGHRSSSLSRGGHGGGGQETYYRQETTRRQQHNNYDDNFNRGIAHARYGSLSDSLRRGELQYVPNGEVRQSFYRDGSNGGQRMHKSYSTRDVFTGDGYDDRRSVSSFRRGSQQQVSPFVEFPPTLPRRGGGGDYRREEDAYFRPVSKSRSYADWDDAGRAGMGREVRRYDDDMSRLEAEFRDSLLMPMPAGNMNERDHRTEQLPGGYETFNKERHANSGRRSGRDGKPVDFNEATQEYNYKREQTLNDDRRRR</sequence>
<proteinExistence type="evidence at protein level"/>
<feature type="chain" id="PRO_0000436363" description="Protein pat-12" evidence="4">
    <location>
        <begin position="1"/>
        <end position="663"/>
    </location>
</feature>
<feature type="region of interest" description="Disordered" evidence="1">
    <location>
        <begin position="1"/>
        <end position="78"/>
    </location>
</feature>
<feature type="region of interest" description="Disordered" evidence="1">
    <location>
        <begin position="367"/>
        <end position="430"/>
    </location>
</feature>
<feature type="region of interest" description="Disordered" evidence="1">
    <location>
        <begin position="517"/>
        <end position="546"/>
    </location>
</feature>
<feature type="region of interest" description="Disordered" evidence="1">
    <location>
        <begin position="597"/>
        <end position="663"/>
    </location>
</feature>
<feature type="compositionally biased region" description="Polar residues" evidence="1">
    <location>
        <begin position="1"/>
        <end position="15"/>
    </location>
</feature>
<feature type="compositionally biased region" description="Basic and acidic residues" evidence="1">
    <location>
        <begin position="367"/>
        <end position="380"/>
    </location>
</feature>
<feature type="compositionally biased region" description="Basic residues" evidence="1">
    <location>
        <begin position="381"/>
        <end position="400"/>
    </location>
</feature>
<feature type="compositionally biased region" description="Polar residues" evidence="1">
    <location>
        <begin position="517"/>
        <end position="526"/>
    </location>
</feature>
<feature type="compositionally biased region" description="Basic and acidic residues" evidence="1">
    <location>
        <begin position="620"/>
        <end position="640"/>
    </location>
</feature>
<feature type="compositionally biased region" description="Basic and acidic residues" evidence="1">
    <location>
        <begin position="649"/>
        <end position="663"/>
    </location>
</feature>
<feature type="splice variant" id="VSP_058352" description="In isoform g." evidence="4">
    <location>
        <begin position="1"/>
        <end position="257"/>
    </location>
</feature>
<feature type="splice variant" id="VSP_058353" description="In isoform e, isoform h and isoform i." evidence="4">
    <original>MTSHIATETSVNRWSTEPVVREEGRPPGPEDFPSTKQGREQDGNVIGITPNYKIGEQKPNSELNLGKTGSLPRGSGDYKMTYRQEDYKQTIIDPKVITNANMPYISTRIPDPRRNLAGDFPSEHSKSKIKLDPLEQRRFRSSESRPITTSNYLAESVDRHREMEASRLREYLKAKENEANQPWNKPGWPGPKKNDESLRELETMKQRIETLKR</original>
    <variation>MRQGGIYQTK</variation>
    <location>
        <begin position="1"/>
        <end position="213"/>
    </location>
</feature>
<feature type="splice variant" id="VSP_058354" description="In isoform k." evidence="4">
    <original>MTSHIATETSVNRWSTEPVVREEGRPPGP</original>
    <variation>MVEIYKPPQKRISSQLMQKLQLF</variation>
    <location>
        <begin position="1"/>
        <end position="29"/>
    </location>
</feature>
<feature type="splice variant" id="VSP_058355" description="In isoform j." evidence="4">
    <original>M</original>
    <variation>MEKEKEEKDGTKDAKKDEEEPSVKVFIRPLEVTVPADFLFQKPEKAQKTYWSTM</variation>
    <location>
        <position position="1"/>
    </location>
</feature>
<feature type="splice variant" id="VSP_058356" description="In isoform d." evidence="4">
    <original>TSHIATETSVNRWSTEPVVREEGRPPGPEDFPSTKQGREQDGNVIGITPNYKIGEQKPNSELNLGKTGSLPRGSGDYKMTYRQEDYKQTIIDPKVITNANMPYISTRIPDPRRNLAGDFPSEHSKSKIKLDPLEQRRFRSSESRPITTSNYLAESVDRHREMEASRLREYLKAKENEANQPWNKPGWPGPKKNDESLRELETMKQRIETLKRDANKGPVNAELDELSKRAEELRKRDGWSKYKLVESDIYKTDPDPMPANIKDQVRDLLESRNSVETTTTQRDHDKSGYVTDVSTATWNFSTVDYSPRSVVSMNGASHDILKDDKPRSIMKRNDLVRREQMLYPTVDTQVVKSVVKKPTVTETVQRFEETRRTEEVERRVQRREKKERRSRHHSSSRHHSGWEGHTGGYQGHRSSSLSRGGHGGGGQETYYRQETTRRQQHNNYDDNFNRGIAHARYGSLSDSLRRGELQYVPNGEVRQSFYRDGSNGGQRMHKSYSTRDVFTGDGYDDRRSVSSFRRGSQQQVSPFVEFPPTLPRRGGGGDYRREEDAYFRPVSKSRSYADWDDAGRAGMGREVRRYDDDMSRLEAEFRDSLLMPMPAGNMNERDHRTEQLPGGYETFNKERHANSGRRSGRDGKPVDFNEATQEYNYKREQTLNDDRRRR</original>
    <variation>SFQQPQASPISPGDSGWLIKMRKNRYLDHTSKVNEPKKYRSMDQLPTGKVGAPDNEKSEGTDPLHWQLRKDFHLAKYSERRASYHVESSSYIHSSQQIQHPPQQHHPPPPSPPPVAETIQHQPHPSQQQPSTTTISSRQLYKSQLLYPPGSTENIASEHKPAIRPPEKSVYENNPIAPSELNVQVKRAPPQGPPPPPPPQAPADIDYPERLMSPPPTHQPRSILKGYSSQQYYSQTNLTESHHHQSSQETSLNPQQMHPRPSDRRTPTHFEDLSEDEKTRIMHENLQRHRNMRSGPNGPRPTTTSFNGPFFRLEQVNPGQNQPQQPQYQQHPRSQSVDPSGDMNGGPRPIHQNFSASEIELHHYSRNAEPSVVVWPPVSEKERERPSSVLAKNFNDPERIDEYQRQKRLEYEAIQRTNEKQAVSMAKQVNAMMQQQKLYERSHGMTSPVPIMESISPQPQVSHHHHQPQQHQQHQPQQQYYPSPPPPPQPYRDPEPVFNPVQVYETRPISALSDQIDQPPSQQAPTSWKRTYIVERPRDVAKNEIITSDQLLEKEAYDVDLLKRRETFVEKPEEAPRINRLGRRWQPPPERPYVWPTLRRAMSVEPSSMPVDFAPGVPHNYDDNEEYKWEPVVNDPGYKKEDKNFTPVNSPPASPRRGHGVGPLDEPARRQAKYVIQPSPDGSHRPKAVFRKERHAPSGGFYPHAPNAIKVVKKRAQSVQGLLSPTDNVEVIHQRNYHRLDLEQNGHHGQKLRRSQHGGSEMDLRRSTQEMPDWEKIYELPPHSSQIVQKDMPRHVDVQRRLSKFEGSIQNLRAATSTQHLDSMQQLHFPMPDYEPPQPPQQRRRTESSGYRGGPPPPPPMPQQQPREMSRRNSVASTRIDSPSLMIPHHRQSRSDSRGPPQMSRAASSIPLSPQPTPQHHHHHHSQRPTTPGATRARNYIARATAPSPTPYSYDRARAYVPPALPPGYRLADPIPDQRAMSPSPGHTRKLIRNVSESAQRLHPSGSTPQTSRAPSRHSHRQSPNPRFL</variation>
    <location>
        <begin position="2"/>
        <end position="663"/>
    </location>
</feature>
<feature type="splice variant" id="VSP_058357" description="In isoform b and isoform i." evidence="4">
    <original>NAELDELSKRAEELRKRDGWSKYKLVESDIYKTDPDPMPANIKDQVRDLLESRNSVETTTTQRDHDKSGYVTDVSTATWNFSTVDYSPRSVVSMNGASHDILK</original>
    <variation>TVPPLRTKTPPPPPPPVRRHEIYEQHKRYTSAPNLQSAVIRIQ</variation>
    <location>
        <begin position="221"/>
        <end position="323"/>
    </location>
</feature>
<feature type="splice variant" id="VSP_058358" description="In isoform h." evidence="4">
    <location>
        <begin position="221"/>
        <end position="323"/>
    </location>
</feature>
<feature type="splice variant" id="VSP_058359" description="In isoform e and isoform g." evidence="4">
    <location>
        <begin position="293"/>
        <end position="323"/>
    </location>
</feature>
<feature type="splice variant" id="VSP_058360" description="In isoform c." evidence="4">
    <original>K</original>
    <variation>KTVPPLRTKTPPPPPPPVRRHEIYEQHKRYTSAPNLQSAVIRIQ</variation>
    <location>
        <position position="323"/>
    </location>
</feature>
<feature type="splice variant" id="VSP_058361" description="In isoform e, isoform h and isoform i." evidence="4">
    <original>G</original>
    <variation>EYRQGAITSSLPRRQIIREADRAMTEEEMNKVVREAYAAADEARKDSR</variation>
    <location>
        <position position="412"/>
    </location>
</feature>
<evidence type="ECO:0000256" key="1">
    <source>
        <dbReference type="SAM" id="MobiDB-lite"/>
    </source>
</evidence>
<evidence type="ECO:0000269" key="2">
    <source>
    </source>
</evidence>
<evidence type="ECO:0000303" key="3">
    <source>
    </source>
</evidence>
<evidence type="ECO:0000305" key="4"/>
<evidence type="ECO:0000312" key="5">
    <source>
        <dbReference type="Proteomes" id="UP000001940"/>
    </source>
</evidence>
<evidence type="ECO:0000312" key="6">
    <source>
        <dbReference type="WormBase" id="T17H7.4a"/>
    </source>
</evidence>
<evidence type="ECO:0000312" key="7">
    <source>
        <dbReference type="WormBase" id="T17H7.4b"/>
    </source>
</evidence>
<evidence type="ECO:0000312" key="8">
    <source>
        <dbReference type="WormBase" id="T17H7.4c"/>
    </source>
</evidence>
<evidence type="ECO:0000312" key="9">
    <source>
        <dbReference type="WormBase" id="T17H7.4d"/>
    </source>
</evidence>
<evidence type="ECO:0000312" key="10">
    <source>
        <dbReference type="WormBase" id="T17H7.4e"/>
    </source>
</evidence>
<evidence type="ECO:0000312" key="11">
    <source>
        <dbReference type="WormBase" id="T17H7.4g"/>
    </source>
</evidence>
<evidence type="ECO:0000312" key="12">
    <source>
        <dbReference type="WormBase" id="T17H7.4h"/>
    </source>
</evidence>
<evidence type="ECO:0000312" key="13">
    <source>
        <dbReference type="WormBase" id="T17H7.4i"/>
    </source>
</evidence>
<evidence type="ECO:0000312" key="14">
    <source>
        <dbReference type="WormBase" id="T17H7.4j"/>
    </source>
</evidence>
<evidence type="ECO:0000312" key="15">
    <source>
        <dbReference type="WormBase" id="T17H7.4k"/>
    </source>
</evidence>
<accession>Q95QA6</accession>
<accession>H2KYY3</accession>
<accession>H2KYY4</accession>
<accession>H2KYY5</accession>
<accession>H2KYY6</accession>
<accession>H2KYY7</accession>
<accession>H2KYY8</accession>
<accession>H2KYY9</accession>
<accession>H2KYZ0</accession>
<accession>H2KYZ1</accession>
<accession>H2KYZ2</accession>
<accession>Q8MPW4</accession>
<reference evidence="5" key="1">
    <citation type="journal article" date="1998" name="Science">
        <title>Genome sequence of the nematode C. elegans: a platform for investigating biology.</title>
        <authorList>
            <consortium name="The C. elegans sequencing consortium"/>
        </authorList>
    </citation>
    <scope>NUCLEOTIDE SEQUENCE [LARGE SCALE GENOMIC DNA]</scope>
    <source>
        <strain evidence="5">Bristol N2</strain>
    </source>
</reference>
<reference evidence="4" key="2">
    <citation type="journal article" date="2011" name="Dev. Biol.">
        <title>PAT-12, a potential anti-nematode target, is a new spectraplakin partner essential for Caenorhabditis elegans hemidesmosome integrity and embryonic morphogenesis.</title>
        <authorList>
            <person name="Hetherington S."/>
            <person name="Gally C."/>
            <person name="Fritz J.A."/>
            <person name="Polanowska J."/>
            <person name="Reboul J."/>
            <person name="Schwab Y."/>
            <person name="Zahreddine H."/>
            <person name="Behm C."/>
            <person name="Labouesse M."/>
        </authorList>
    </citation>
    <scope>FUNCTION</scope>
    <scope>INTERACTION WITH VAB-10</scope>
    <scope>SUBCELLULAR LOCATION</scope>
    <scope>ALTERNATIVE SPLICING</scope>
    <scope>TISSUE SPECIFICITY</scope>
    <scope>DEVELOPMENTAL STAGE</scope>
    <scope>DISRUPTION PHENOTYPE</scope>
</reference>